<proteinExistence type="inferred from homology"/>
<feature type="chain" id="PRO_0000305785" description="Bifunctional protein FolD">
    <location>
        <begin position="1"/>
        <end position="282"/>
    </location>
</feature>
<feature type="binding site" evidence="1">
    <location>
        <begin position="166"/>
        <end position="168"/>
    </location>
    <ligand>
        <name>NADP(+)</name>
        <dbReference type="ChEBI" id="CHEBI:58349"/>
    </ligand>
</feature>
<feature type="binding site" evidence="1">
    <location>
        <position position="191"/>
    </location>
    <ligand>
        <name>NADP(+)</name>
        <dbReference type="ChEBI" id="CHEBI:58349"/>
    </ligand>
</feature>
<reference key="1">
    <citation type="submission" date="2006-12" db="EMBL/GenBank/DDBJ databases">
        <title>Complete sequence of chromosome 1 of Acidovorax sp. JS42.</title>
        <authorList>
            <person name="Copeland A."/>
            <person name="Lucas S."/>
            <person name="Lapidus A."/>
            <person name="Barry K."/>
            <person name="Detter J.C."/>
            <person name="Glavina del Rio T."/>
            <person name="Dalin E."/>
            <person name="Tice H."/>
            <person name="Pitluck S."/>
            <person name="Chertkov O."/>
            <person name="Brettin T."/>
            <person name="Bruce D."/>
            <person name="Han C."/>
            <person name="Tapia R."/>
            <person name="Gilna P."/>
            <person name="Schmutz J."/>
            <person name="Larimer F."/>
            <person name="Land M."/>
            <person name="Hauser L."/>
            <person name="Kyrpides N."/>
            <person name="Kim E."/>
            <person name="Stahl D."/>
            <person name="Richardson P."/>
        </authorList>
    </citation>
    <scope>NUCLEOTIDE SEQUENCE [LARGE SCALE GENOMIC DNA]</scope>
    <source>
        <strain>JS42</strain>
    </source>
</reference>
<protein>
    <recommendedName>
        <fullName evidence="1">Bifunctional protein FolD</fullName>
    </recommendedName>
    <domain>
        <recommendedName>
            <fullName evidence="1">Methylenetetrahydrofolate dehydrogenase</fullName>
            <ecNumber evidence="1">1.5.1.5</ecNumber>
        </recommendedName>
    </domain>
    <domain>
        <recommendedName>
            <fullName evidence="1">Methenyltetrahydrofolate cyclohydrolase</fullName>
            <ecNumber evidence="1">3.5.4.9</ecNumber>
        </recommendedName>
    </domain>
</protein>
<evidence type="ECO:0000255" key="1">
    <source>
        <dbReference type="HAMAP-Rule" id="MF_01576"/>
    </source>
</evidence>
<accession>A1W7S2</accession>
<comment type="function">
    <text evidence="1">Catalyzes the oxidation of 5,10-methylenetetrahydrofolate to 5,10-methenyltetrahydrofolate and then the hydrolysis of 5,10-methenyltetrahydrofolate to 10-formyltetrahydrofolate.</text>
</comment>
<comment type="catalytic activity">
    <reaction evidence="1">
        <text>(6R)-5,10-methylene-5,6,7,8-tetrahydrofolate + NADP(+) = (6R)-5,10-methenyltetrahydrofolate + NADPH</text>
        <dbReference type="Rhea" id="RHEA:22812"/>
        <dbReference type="ChEBI" id="CHEBI:15636"/>
        <dbReference type="ChEBI" id="CHEBI:57455"/>
        <dbReference type="ChEBI" id="CHEBI:57783"/>
        <dbReference type="ChEBI" id="CHEBI:58349"/>
        <dbReference type="EC" id="1.5.1.5"/>
    </reaction>
</comment>
<comment type="catalytic activity">
    <reaction evidence="1">
        <text>(6R)-5,10-methenyltetrahydrofolate + H2O = (6R)-10-formyltetrahydrofolate + H(+)</text>
        <dbReference type="Rhea" id="RHEA:23700"/>
        <dbReference type="ChEBI" id="CHEBI:15377"/>
        <dbReference type="ChEBI" id="CHEBI:15378"/>
        <dbReference type="ChEBI" id="CHEBI:57455"/>
        <dbReference type="ChEBI" id="CHEBI:195366"/>
        <dbReference type="EC" id="3.5.4.9"/>
    </reaction>
</comment>
<comment type="pathway">
    <text evidence="1">One-carbon metabolism; tetrahydrofolate interconversion.</text>
</comment>
<comment type="subunit">
    <text evidence="1">Homodimer.</text>
</comment>
<comment type="similarity">
    <text evidence="1">Belongs to the tetrahydrofolate dehydrogenase/cyclohydrolase family.</text>
</comment>
<organism>
    <name type="scientific">Acidovorax sp. (strain JS42)</name>
    <dbReference type="NCBI Taxonomy" id="232721"/>
    <lineage>
        <taxon>Bacteria</taxon>
        <taxon>Pseudomonadati</taxon>
        <taxon>Pseudomonadota</taxon>
        <taxon>Betaproteobacteria</taxon>
        <taxon>Burkholderiales</taxon>
        <taxon>Comamonadaceae</taxon>
        <taxon>Acidovorax</taxon>
    </lineage>
</organism>
<keyword id="KW-0028">Amino-acid biosynthesis</keyword>
<keyword id="KW-0368">Histidine biosynthesis</keyword>
<keyword id="KW-0378">Hydrolase</keyword>
<keyword id="KW-0486">Methionine biosynthesis</keyword>
<keyword id="KW-0511">Multifunctional enzyme</keyword>
<keyword id="KW-0521">NADP</keyword>
<keyword id="KW-0554">One-carbon metabolism</keyword>
<keyword id="KW-0560">Oxidoreductase</keyword>
<keyword id="KW-0658">Purine biosynthesis</keyword>
<gene>
    <name evidence="1" type="primary">folD</name>
    <name type="ordered locus">Ajs_2128</name>
</gene>
<dbReference type="EC" id="1.5.1.5" evidence="1"/>
<dbReference type="EC" id="3.5.4.9" evidence="1"/>
<dbReference type="EMBL" id="CP000539">
    <property type="protein sequence ID" value="ABM42297.1"/>
    <property type="molecule type" value="Genomic_DNA"/>
</dbReference>
<dbReference type="SMR" id="A1W7S2"/>
<dbReference type="STRING" id="232721.Ajs_2128"/>
<dbReference type="KEGG" id="ajs:Ajs_2128"/>
<dbReference type="eggNOG" id="COG0190">
    <property type="taxonomic scope" value="Bacteria"/>
</dbReference>
<dbReference type="HOGENOM" id="CLU_034045_2_1_4"/>
<dbReference type="UniPathway" id="UPA00193"/>
<dbReference type="Proteomes" id="UP000000645">
    <property type="component" value="Chromosome"/>
</dbReference>
<dbReference type="GO" id="GO:0005829">
    <property type="term" value="C:cytosol"/>
    <property type="evidence" value="ECO:0007669"/>
    <property type="project" value="TreeGrafter"/>
</dbReference>
<dbReference type="GO" id="GO:0004477">
    <property type="term" value="F:methenyltetrahydrofolate cyclohydrolase activity"/>
    <property type="evidence" value="ECO:0007669"/>
    <property type="project" value="UniProtKB-UniRule"/>
</dbReference>
<dbReference type="GO" id="GO:0004488">
    <property type="term" value="F:methylenetetrahydrofolate dehydrogenase (NADP+) activity"/>
    <property type="evidence" value="ECO:0007669"/>
    <property type="project" value="UniProtKB-UniRule"/>
</dbReference>
<dbReference type="GO" id="GO:0000105">
    <property type="term" value="P:L-histidine biosynthetic process"/>
    <property type="evidence" value="ECO:0007669"/>
    <property type="project" value="UniProtKB-KW"/>
</dbReference>
<dbReference type="GO" id="GO:0009086">
    <property type="term" value="P:methionine biosynthetic process"/>
    <property type="evidence" value="ECO:0007669"/>
    <property type="project" value="UniProtKB-KW"/>
</dbReference>
<dbReference type="GO" id="GO:0006164">
    <property type="term" value="P:purine nucleotide biosynthetic process"/>
    <property type="evidence" value="ECO:0007669"/>
    <property type="project" value="UniProtKB-KW"/>
</dbReference>
<dbReference type="GO" id="GO:0035999">
    <property type="term" value="P:tetrahydrofolate interconversion"/>
    <property type="evidence" value="ECO:0007669"/>
    <property type="project" value="UniProtKB-UniRule"/>
</dbReference>
<dbReference type="CDD" id="cd01080">
    <property type="entry name" value="NAD_bind_m-THF_DH_Cyclohyd"/>
    <property type="match status" value="1"/>
</dbReference>
<dbReference type="FunFam" id="3.40.50.720:FF:000094">
    <property type="entry name" value="Bifunctional protein FolD"/>
    <property type="match status" value="1"/>
</dbReference>
<dbReference type="FunFam" id="3.40.50.10860:FF:000005">
    <property type="entry name" value="C-1-tetrahydrofolate synthase, cytoplasmic, putative"/>
    <property type="match status" value="1"/>
</dbReference>
<dbReference type="Gene3D" id="3.40.50.10860">
    <property type="entry name" value="Leucine Dehydrogenase, chain A, domain 1"/>
    <property type="match status" value="1"/>
</dbReference>
<dbReference type="Gene3D" id="3.40.50.720">
    <property type="entry name" value="NAD(P)-binding Rossmann-like Domain"/>
    <property type="match status" value="1"/>
</dbReference>
<dbReference type="HAMAP" id="MF_01576">
    <property type="entry name" value="THF_DHG_CYH"/>
    <property type="match status" value="1"/>
</dbReference>
<dbReference type="InterPro" id="IPR046346">
    <property type="entry name" value="Aminoacid_DH-like_N_sf"/>
</dbReference>
<dbReference type="InterPro" id="IPR036291">
    <property type="entry name" value="NAD(P)-bd_dom_sf"/>
</dbReference>
<dbReference type="InterPro" id="IPR000672">
    <property type="entry name" value="THF_DH/CycHdrlase"/>
</dbReference>
<dbReference type="InterPro" id="IPR020630">
    <property type="entry name" value="THF_DH/CycHdrlase_cat_dom"/>
</dbReference>
<dbReference type="InterPro" id="IPR020867">
    <property type="entry name" value="THF_DH/CycHdrlase_CS"/>
</dbReference>
<dbReference type="InterPro" id="IPR020631">
    <property type="entry name" value="THF_DH/CycHdrlase_NAD-bd_dom"/>
</dbReference>
<dbReference type="NCBIfam" id="NF008058">
    <property type="entry name" value="PRK10792.1"/>
    <property type="match status" value="1"/>
</dbReference>
<dbReference type="NCBIfam" id="NF010783">
    <property type="entry name" value="PRK14186.1"/>
    <property type="match status" value="1"/>
</dbReference>
<dbReference type="NCBIfam" id="NF010786">
    <property type="entry name" value="PRK14189.1"/>
    <property type="match status" value="1"/>
</dbReference>
<dbReference type="PANTHER" id="PTHR48099:SF5">
    <property type="entry name" value="C-1-TETRAHYDROFOLATE SYNTHASE, CYTOPLASMIC"/>
    <property type="match status" value="1"/>
</dbReference>
<dbReference type="PANTHER" id="PTHR48099">
    <property type="entry name" value="C-1-TETRAHYDROFOLATE SYNTHASE, CYTOPLASMIC-RELATED"/>
    <property type="match status" value="1"/>
</dbReference>
<dbReference type="Pfam" id="PF00763">
    <property type="entry name" value="THF_DHG_CYH"/>
    <property type="match status" value="1"/>
</dbReference>
<dbReference type="Pfam" id="PF02882">
    <property type="entry name" value="THF_DHG_CYH_C"/>
    <property type="match status" value="1"/>
</dbReference>
<dbReference type="PRINTS" id="PR00085">
    <property type="entry name" value="THFDHDRGNASE"/>
</dbReference>
<dbReference type="SUPFAM" id="SSF53223">
    <property type="entry name" value="Aminoacid dehydrogenase-like, N-terminal domain"/>
    <property type="match status" value="1"/>
</dbReference>
<dbReference type="SUPFAM" id="SSF51735">
    <property type="entry name" value="NAD(P)-binding Rossmann-fold domains"/>
    <property type="match status" value="1"/>
</dbReference>
<dbReference type="PROSITE" id="PS00766">
    <property type="entry name" value="THF_DHG_CYH_1"/>
    <property type="match status" value="1"/>
</dbReference>
<dbReference type="PROSITE" id="PS00767">
    <property type="entry name" value="THF_DHG_CYH_2"/>
    <property type="match status" value="1"/>
</dbReference>
<name>FOLD_ACISJ</name>
<sequence>MTAQLIDGNALSRQLRTEVAARTAALKDRGITPGLAVVLVGDNPASQVYVRNKVKACEDVGFHSVLEKYDASMTEEQLLARVQALNNDPSIHGILVQLPLPKHIDDHKVIEAISPLKDVDGFHVASAGALMVGQVGFKACTPYGCMKMLESIGMKDLRGKHAVVIGRSNIVGKPMAMMLLAANATVTVCHSGTADLAAMTRQADVVVAAVGKRNVLTADMVKPGAVVIDVGMNRNDEGKLCGDVDFEGVKQVAGYITPVPGGVGPMTITMLLVNTLEAAERL</sequence>